<keyword id="KW-0028">Amino-acid biosynthesis</keyword>
<keyword id="KW-0032">Aminotransferase</keyword>
<keyword id="KW-0368">Histidine biosynthesis</keyword>
<keyword id="KW-0663">Pyridoxal phosphate</keyword>
<keyword id="KW-1185">Reference proteome</keyword>
<keyword id="KW-0808">Transferase</keyword>
<sequence length="356" mass="38090">MKLTVQQLVRPEIAAIGAYHVAAADGFIKLDAMENPWPLPIELQHELAAELAQVALNRYPDADGGGLKAALRAAFAIPAAAGIVLGNGSDELITLVTQALARPGAKLLALEPSFVMYKMNALFSGLQYVGVPLRADFTLDLPATLAAIEREQPAVVFVSYPNNPTGPRYGRDEVMAICRAAPGLVVVDEAYQSFASDSFMDLAGELDNLLVMRTLSKLGLAGIRLGYAAASPAWINELNKVRPPYNVNVLTIAAARFALKHLDVFNRQAAELRAERAKLSAALAALPQLAAFPSEANFVTVRAPDAPALFQHLKASGILIKQLHGSHPLLENCLRLTVGSPDENAALLSAIQRFFV</sequence>
<name>HIS8_CHRVO</name>
<protein>
    <recommendedName>
        <fullName evidence="1">Histidinol-phosphate aminotransferase</fullName>
        <ecNumber evidence="1">2.6.1.9</ecNumber>
    </recommendedName>
    <alternativeName>
        <fullName evidence="1">Imidazole acetol-phosphate transaminase</fullName>
    </alternativeName>
</protein>
<gene>
    <name evidence="1" type="primary">hisC</name>
    <name type="ordered locus">CV_0613</name>
</gene>
<feature type="chain" id="PRO_0000153345" description="Histidinol-phosphate aminotransferase">
    <location>
        <begin position="1"/>
        <end position="356"/>
    </location>
</feature>
<feature type="modified residue" description="N6-(pyridoxal phosphate)lysine" evidence="1">
    <location>
        <position position="217"/>
    </location>
</feature>
<organism>
    <name type="scientific">Chromobacterium violaceum (strain ATCC 12472 / DSM 30191 / JCM 1249 / CCUG 213 / NBRC 12614 / NCIMB 9131 / NCTC 9757 / MK)</name>
    <dbReference type="NCBI Taxonomy" id="243365"/>
    <lineage>
        <taxon>Bacteria</taxon>
        <taxon>Pseudomonadati</taxon>
        <taxon>Pseudomonadota</taxon>
        <taxon>Betaproteobacteria</taxon>
        <taxon>Neisseriales</taxon>
        <taxon>Chromobacteriaceae</taxon>
        <taxon>Chromobacterium</taxon>
    </lineage>
</organism>
<dbReference type="EC" id="2.6.1.9" evidence="1"/>
<dbReference type="EMBL" id="AE016825">
    <property type="protein sequence ID" value="AAQ58289.1"/>
    <property type="molecule type" value="Genomic_DNA"/>
</dbReference>
<dbReference type="RefSeq" id="WP_011134168.1">
    <property type="nucleotide sequence ID" value="NC_005085.1"/>
</dbReference>
<dbReference type="SMR" id="Q7P0F4"/>
<dbReference type="STRING" id="243365.CV_0613"/>
<dbReference type="KEGG" id="cvi:CV_0613"/>
<dbReference type="eggNOG" id="COG0079">
    <property type="taxonomic scope" value="Bacteria"/>
</dbReference>
<dbReference type="HOGENOM" id="CLU_017584_3_1_4"/>
<dbReference type="OrthoDB" id="9813612at2"/>
<dbReference type="UniPathway" id="UPA00031">
    <property type="reaction ID" value="UER00012"/>
</dbReference>
<dbReference type="Proteomes" id="UP000001424">
    <property type="component" value="Chromosome"/>
</dbReference>
<dbReference type="GO" id="GO:0004400">
    <property type="term" value="F:histidinol-phosphate transaminase activity"/>
    <property type="evidence" value="ECO:0007669"/>
    <property type="project" value="UniProtKB-UniRule"/>
</dbReference>
<dbReference type="GO" id="GO:0030170">
    <property type="term" value="F:pyridoxal phosphate binding"/>
    <property type="evidence" value="ECO:0007669"/>
    <property type="project" value="InterPro"/>
</dbReference>
<dbReference type="GO" id="GO:0000105">
    <property type="term" value="P:L-histidine biosynthetic process"/>
    <property type="evidence" value="ECO:0007669"/>
    <property type="project" value="UniProtKB-UniRule"/>
</dbReference>
<dbReference type="CDD" id="cd00609">
    <property type="entry name" value="AAT_like"/>
    <property type="match status" value="1"/>
</dbReference>
<dbReference type="Gene3D" id="3.90.1150.10">
    <property type="entry name" value="Aspartate Aminotransferase, domain 1"/>
    <property type="match status" value="1"/>
</dbReference>
<dbReference type="Gene3D" id="3.40.640.10">
    <property type="entry name" value="Type I PLP-dependent aspartate aminotransferase-like (Major domain)"/>
    <property type="match status" value="1"/>
</dbReference>
<dbReference type="HAMAP" id="MF_01023">
    <property type="entry name" value="HisC_aminotrans_2"/>
    <property type="match status" value="1"/>
</dbReference>
<dbReference type="InterPro" id="IPR004839">
    <property type="entry name" value="Aminotransferase_I/II_large"/>
</dbReference>
<dbReference type="InterPro" id="IPR005861">
    <property type="entry name" value="HisP_aminotrans"/>
</dbReference>
<dbReference type="InterPro" id="IPR015424">
    <property type="entry name" value="PyrdxlP-dep_Trfase"/>
</dbReference>
<dbReference type="InterPro" id="IPR015421">
    <property type="entry name" value="PyrdxlP-dep_Trfase_major"/>
</dbReference>
<dbReference type="InterPro" id="IPR015422">
    <property type="entry name" value="PyrdxlP-dep_Trfase_small"/>
</dbReference>
<dbReference type="NCBIfam" id="TIGR01141">
    <property type="entry name" value="hisC"/>
    <property type="match status" value="1"/>
</dbReference>
<dbReference type="PANTHER" id="PTHR42885:SF2">
    <property type="entry name" value="HISTIDINOL-PHOSPHATE AMINOTRANSFERASE"/>
    <property type="match status" value="1"/>
</dbReference>
<dbReference type="PANTHER" id="PTHR42885">
    <property type="entry name" value="HISTIDINOL-PHOSPHATE AMINOTRANSFERASE-RELATED"/>
    <property type="match status" value="1"/>
</dbReference>
<dbReference type="Pfam" id="PF00155">
    <property type="entry name" value="Aminotran_1_2"/>
    <property type="match status" value="1"/>
</dbReference>
<dbReference type="SUPFAM" id="SSF53383">
    <property type="entry name" value="PLP-dependent transferases"/>
    <property type="match status" value="1"/>
</dbReference>
<accession>Q7P0F4</accession>
<reference key="1">
    <citation type="journal article" date="2003" name="Proc. Natl. Acad. Sci. U.S.A.">
        <title>The complete genome sequence of Chromobacterium violaceum reveals remarkable and exploitable bacterial adaptability.</title>
        <authorList>
            <person name="Vasconcelos A.T.R."/>
            <person name="de Almeida D.F."/>
            <person name="Hungria M."/>
            <person name="Guimaraes C.T."/>
            <person name="Antonio R.V."/>
            <person name="Almeida F.C."/>
            <person name="de Almeida L.G.P."/>
            <person name="de Almeida R."/>
            <person name="Alves-Gomes J.A."/>
            <person name="Andrade E.M."/>
            <person name="Araripe J."/>
            <person name="de Araujo M.F.F."/>
            <person name="Astolfi-Filho S."/>
            <person name="Azevedo V."/>
            <person name="Baptista A.J."/>
            <person name="Bataus L.A.M."/>
            <person name="Batista J.S."/>
            <person name="Belo A."/>
            <person name="van den Berg C."/>
            <person name="Bogo M."/>
            <person name="Bonatto S."/>
            <person name="Bordignon J."/>
            <person name="Brigido M.M."/>
            <person name="Brito C.A."/>
            <person name="Brocchi M."/>
            <person name="Burity H.A."/>
            <person name="Camargo A.A."/>
            <person name="Cardoso D.D.P."/>
            <person name="Carneiro N.P."/>
            <person name="Carraro D.M."/>
            <person name="Carvalho C.M.B."/>
            <person name="Cascardo J.C.M."/>
            <person name="Cavada B.S."/>
            <person name="Chueire L.M.O."/>
            <person name="Creczynski-Pasa T.B."/>
            <person name="Cunha-Junior N.C."/>
            <person name="Fagundes N."/>
            <person name="Falcao C.L."/>
            <person name="Fantinatti F."/>
            <person name="Farias I.P."/>
            <person name="Felipe M.S.S."/>
            <person name="Ferrari L.P."/>
            <person name="Ferro J.A."/>
            <person name="Ferro M.I.T."/>
            <person name="Franco G.R."/>
            <person name="Freitas N.S.A."/>
            <person name="Furlan L.R."/>
            <person name="Gazzinelli R.T."/>
            <person name="Gomes E.A."/>
            <person name="Goncalves P.R."/>
            <person name="Grangeiro T.B."/>
            <person name="Grattapaglia D."/>
            <person name="Grisard E.C."/>
            <person name="Hanna E.S."/>
            <person name="Jardim S.N."/>
            <person name="Laurino J."/>
            <person name="Leoi L.C.T."/>
            <person name="Lima L.F.A."/>
            <person name="Loureiro M.F."/>
            <person name="Lyra M.C.C.P."/>
            <person name="Madeira H.M.F."/>
            <person name="Manfio G.P."/>
            <person name="Maranhao A.Q."/>
            <person name="Martins W.S."/>
            <person name="di Mauro S.M.Z."/>
            <person name="de Medeiros S.R.B."/>
            <person name="Meissner R.V."/>
            <person name="Moreira M.A.M."/>
            <person name="Nascimento F.F."/>
            <person name="Nicolas M.F."/>
            <person name="Oliveira J.G."/>
            <person name="Oliveira S.C."/>
            <person name="Paixao R.F.C."/>
            <person name="Parente J.A."/>
            <person name="Pedrosa F.O."/>
            <person name="Pena S.D.J."/>
            <person name="Pereira J.O."/>
            <person name="Pereira M."/>
            <person name="Pinto L.S.R.C."/>
            <person name="Pinto L.S."/>
            <person name="Porto J.I.R."/>
            <person name="Potrich D.P."/>
            <person name="Ramalho-Neto C.E."/>
            <person name="Reis A.M.M."/>
            <person name="Rigo L.U."/>
            <person name="Rondinelli E."/>
            <person name="Santos E.B.P."/>
            <person name="Santos F.R."/>
            <person name="Schneider M.P.C."/>
            <person name="Seuanez H.N."/>
            <person name="Silva A.M.R."/>
            <person name="da Silva A.L.C."/>
            <person name="Silva D.W."/>
            <person name="Silva R."/>
            <person name="Simoes I.C."/>
            <person name="Simon D."/>
            <person name="Soares C.M.A."/>
            <person name="Soares R.B.A."/>
            <person name="Souza E.M."/>
            <person name="Souza K.R.L."/>
            <person name="Souza R.C."/>
            <person name="Steffens M.B.R."/>
            <person name="Steindel M."/>
            <person name="Teixeira S.R."/>
            <person name="Urmenyi T."/>
            <person name="Vettore A."/>
            <person name="Wassem R."/>
            <person name="Zaha A."/>
            <person name="Simpson A.J.G."/>
        </authorList>
    </citation>
    <scope>NUCLEOTIDE SEQUENCE [LARGE SCALE GENOMIC DNA]</scope>
    <source>
        <strain>ATCC 12472 / DSM 30191 / JCM 1249 / CCUG 213 / NBRC 12614 / NCIMB 9131 / NCTC 9757 / MK</strain>
    </source>
</reference>
<proteinExistence type="inferred from homology"/>
<evidence type="ECO:0000255" key="1">
    <source>
        <dbReference type="HAMAP-Rule" id="MF_01023"/>
    </source>
</evidence>
<comment type="catalytic activity">
    <reaction evidence="1">
        <text>L-histidinol phosphate + 2-oxoglutarate = 3-(imidazol-4-yl)-2-oxopropyl phosphate + L-glutamate</text>
        <dbReference type="Rhea" id="RHEA:23744"/>
        <dbReference type="ChEBI" id="CHEBI:16810"/>
        <dbReference type="ChEBI" id="CHEBI:29985"/>
        <dbReference type="ChEBI" id="CHEBI:57766"/>
        <dbReference type="ChEBI" id="CHEBI:57980"/>
        <dbReference type="EC" id="2.6.1.9"/>
    </reaction>
</comment>
<comment type="cofactor">
    <cofactor evidence="1">
        <name>pyridoxal 5'-phosphate</name>
        <dbReference type="ChEBI" id="CHEBI:597326"/>
    </cofactor>
</comment>
<comment type="pathway">
    <text evidence="1">Amino-acid biosynthesis; L-histidine biosynthesis; L-histidine from 5-phospho-alpha-D-ribose 1-diphosphate: step 7/9.</text>
</comment>
<comment type="subunit">
    <text evidence="1">Homodimer.</text>
</comment>
<comment type="similarity">
    <text evidence="1">Belongs to the class-II pyridoxal-phosphate-dependent aminotransferase family. Histidinol-phosphate aminotransferase subfamily.</text>
</comment>